<protein>
    <recommendedName>
        <fullName>Isocitrate dehydrogenase [NADP] 2</fullName>
        <ecNumber evidence="8">1.1.1.42</ecNumber>
    </recommendedName>
    <alternativeName>
        <fullName evidence="5">IDH-II</fullName>
    </alternativeName>
    <alternativeName>
        <fullName>IDP-2</fullName>
    </alternativeName>
    <alternativeName>
        <fullName>NADP(+)-specific ICDH 2</fullName>
    </alternativeName>
    <alternativeName>
        <fullName>Oxalosuccinate decarboxylase 2</fullName>
    </alternativeName>
</protein>
<evidence type="ECO:0000250" key="1">
    <source>
        <dbReference type="UniProtKB" id="P16100"/>
    </source>
</evidence>
<evidence type="ECO:0000250" key="2">
    <source>
        <dbReference type="UniProtKB" id="P50216"/>
    </source>
</evidence>
<evidence type="ECO:0000269" key="3">
    <source>
    </source>
</evidence>
<evidence type="ECO:0000269" key="4">
    <source>
    </source>
</evidence>
<evidence type="ECO:0000303" key="5">
    <source>
    </source>
</evidence>
<evidence type="ECO:0000303" key="6">
    <source>
    </source>
</evidence>
<evidence type="ECO:0000305" key="7"/>
<evidence type="ECO:0000305" key="8">
    <source>
    </source>
</evidence>
<feature type="initiator methionine" description="Removed" evidence="3 4">
    <location>
        <position position="1"/>
    </location>
</feature>
<feature type="chain" id="PRO_0000083596" description="Isocitrate dehydrogenase [NADP] 2">
    <location>
        <begin position="2"/>
        <end position="743"/>
    </location>
</feature>
<feature type="binding site" evidence="1">
    <location>
        <position position="87"/>
    </location>
    <ligand>
        <name>NADP(+)</name>
        <dbReference type="ChEBI" id="CHEBI:58349"/>
    </ligand>
</feature>
<feature type="binding site" evidence="1">
    <location>
        <position position="89"/>
    </location>
    <ligand>
        <name>NADP(+)</name>
        <dbReference type="ChEBI" id="CHEBI:58349"/>
    </ligand>
</feature>
<feature type="binding site" evidence="1">
    <location>
        <position position="134"/>
    </location>
    <ligand>
        <name>D-threo-isocitrate</name>
        <dbReference type="ChEBI" id="CHEBI:15562"/>
    </ligand>
</feature>
<feature type="binding site" evidence="1">
    <location>
        <position position="137"/>
    </location>
    <ligand>
        <name>D-threo-isocitrate</name>
        <dbReference type="ChEBI" id="CHEBI:15562"/>
    </ligand>
</feature>
<feature type="binding site" evidence="1">
    <location>
        <position position="137"/>
    </location>
    <ligand>
        <name>NADP(+)</name>
        <dbReference type="ChEBI" id="CHEBI:58349"/>
    </ligand>
</feature>
<feature type="binding site" evidence="1">
    <location>
        <position position="141"/>
    </location>
    <ligand>
        <name>D-threo-isocitrate</name>
        <dbReference type="ChEBI" id="CHEBI:15562"/>
    </ligand>
</feature>
<feature type="binding site" evidence="1">
    <location>
        <position position="147"/>
    </location>
    <ligand>
        <name>D-threo-isocitrate</name>
        <dbReference type="ChEBI" id="CHEBI:15562"/>
    </ligand>
</feature>
<feature type="binding site" evidence="1">
    <location>
        <position position="257"/>
    </location>
    <ligand>
        <name>D-threo-isocitrate</name>
        <dbReference type="ChEBI" id="CHEBI:15562"/>
    </ligand>
</feature>
<feature type="binding site" evidence="2">
    <location>
        <position position="352"/>
    </location>
    <ligand>
        <name>Mg(2+)</name>
        <dbReference type="ChEBI" id="CHEBI:18420"/>
    </ligand>
</feature>
<feature type="binding site" evidence="1">
    <location>
        <position position="422"/>
    </location>
    <ligand>
        <name>D-threo-isocitrate</name>
        <dbReference type="ChEBI" id="CHEBI:15562"/>
    </ligand>
</feature>
<feature type="binding site" evidence="1">
    <location>
        <position position="549"/>
    </location>
    <ligand>
        <name>D-threo-isocitrate</name>
        <dbReference type="ChEBI" id="CHEBI:15562"/>
    </ligand>
</feature>
<feature type="binding site" evidence="2">
    <location>
        <position position="550"/>
    </location>
    <ligand>
        <name>Mg(2+)</name>
        <dbReference type="ChEBI" id="CHEBI:18420"/>
    </ligand>
</feature>
<feature type="binding site" evidence="2">
    <location>
        <position position="554"/>
    </location>
    <ligand>
        <name>Mg(2+)</name>
        <dbReference type="ChEBI" id="CHEBI:18420"/>
    </ligand>
</feature>
<feature type="binding site" evidence="1">
    <location>
        <position position="587"/>
    </location>
    <ligand>
        <name>NADP(+)</name>
        <dbReference type="ChEBI" id="CHEBI:58349"/>
    </ligand>
</feature>
<feature type="binding site" evidence="1">
    <location>
        <position position="591"/>
    </location>
    <ligand>
        <name>NADP(+)</name>
        <dbReference type="ChEBI" id="CHEBI:58349"/>
    </ligand>
</feature>
<feature type="binding site" evidence="1">
    <location>
        <position position="602"/>
    </location>
    <ligand>
        <name>NADP(+)</name>
        <dbReference type="ChEBI" id="CHEBI:58349"/>
    </ligand>
</feature>
<feature type="binding site" evidence="1">
    <location>
        <position position="604"/>
    </location>
    <ligand>
        <name>NADP(+)</name>
        <dbReference type="ChEBI" id="CHEBI:58349"/>
    </ligand>
</feature>
<feature type="binding site" evidence="1">
    <location>
        <position position="651"/>
    </location>
    <ligand>
        <name>NADP(+)</name>
        <dbReference type="ChEBI" id="CHEBI:58349"/>
    </ligand>
</feature>
<organism>
    <name type="scientific">Colwellia maris</name>
    <dbReference type="NCBI Taxonomy" id="77524"/>
    <lineage>
        <taxon>Bacteria</taxon>
        <taxon>Pseudomonadati</taxon>
        <taxon>Pseudomonadota</taxon>
        <taxon>Gammaproteobacteria</taxon>
        <taxon>Alteromonadales</taxon>
        <taxon>Colwelliaceae</taxon>
        <taxon>Colwellia</taxon>
    </lineage>
</organism>
<name>IDH2_COLMA</name>
<proteinExistence type="evidence at protein level"/>
<dbReference type="EC" id="1.1.1.42" evidence="8"/>
<dbReference type="EMBL" id="D14047">
    <property type="protein sequence ID" value="BAA03134.2"/>
    <property type="molecule type" value="Genomic_DNA"/>
</dbReference>
<dbReference type="PIR" id="A49341">
    <property type="entry name" value="A49341"/>
</dbReference>
<dbReference type="SMR" id="P41561"/>
<dbReference type="GO" id="GO:0004450">
    <property type="term" value="F:isocitrate dehydrogenase (NADP+) activity"/>
    <property type="evidence" value="ECO:0007669"/>
    <property type="project" value="UniProtKB-EC"/>
</dbReference>
<dbReference type="GO" id="GO:0046872">
    <property type="term" value="F:metal ion binding"/>
    <property type="evidence" value="ECO:0007669"/>
    <property type="project" value="UniProtKB-KW"/>
</dbReference>
<dbReference type="GO" id="GO:0006097">
    <property type="term" value="P:glyoxylate cycle"/>
    <property type="evidence" value="ECO:0007669"/>
    <property type="project" value="UniProtKB-KW"/>
</dbReference>
<dbReference type="GO" id="GO:0006099">
    <property type="term" value="P:tricarboxylic acid cycle"/>
    <property type="evidence" value="ECO:0007669"/>
    <property type="project" value="UniProtKB-KW"/>
</dbReference>
<dbReference type="Gene3D" id="3.40.718.10">
    <property type="entry name" value="Isopropylmalate Dehydrogenase"/>
    <property type="match status" value="2"/>
</dbReference>
<dbReference type="InterPro" id="IPR004436">
    <property type="entry name" value="Isocitrate_DH_NADP_mono"/>
</dbReference>
<dbReference type="NCBIfam" id="TIGR00178">
    <property type="entry name" value="monomer_idh"/>
    <property type="match status" value="1"/>
</dbReference>
<dbReference type="PANTHER" id="PTHR36999:SF1">
    <property type="entry name" value="ISOCITRATE DEHYDROGENASE (NADP(+))"/>
    <property type="match status" value="1"/>
</dbReference>
<dbReference type="PANTHER" id="PTHR36999">
    <property type="entry name" value="ISOCITRATE DEHYDROGENASE [NADP]"/>
    <property type="match status" value="1"/>
</dbReference>
<dbReference type="Pfam" id="PF03971">
    <property type="entry name" value="IDH"/>
    <property type="match status" value="1"/>
</dbReference>
<dbReference type="PIRSF" id="PIRSF009407">
    <property type="entry name" value="IDH_monmr"/>
    <property type="match status" value="1"/>
</dbReference>
<dbReference type="SUPFAM" id="SSF53659">
    <property type="entry name" value="Isocitrate/Isopropylmalate dehydrogenase-like"/>
    <property type="match status" value="1"/>
</dbReference>
<comment type="function">
    <text evidence="8">Catalyzes the oxidative decarboxylation of isocitrate to 2-oxoglutarate and carbon dioxide with the concomitant reduction of NADP(+).</text>
</comment>
<comment type="catalytic activity">
    <reaction evidence="8">
        <text>D-threo-isocitrate + NADP(+) = 2-oxoglutarate + CO2 + NADPH</text>
        <dbReference type="Rhea" id="RHEA:19629"/>
        <dbReference type="ChEBI" id="CHEBI:15562"/>
        <dbReference type="ChEBI" id="CHEBI:16526"/>
        <dbReference type="ChEBI" id="CHEBI:16810"/>
        <dbReference type="ChEBI" id="CHEBI:57783"/>
        <dbReference type="ChEBI" id="CHEBI:58349"/>
        <dbReference type="EC" id="1.1.1.42"/>
    </reaction>
</comment>
<comment type="cofactor">
    <cofactor evidence="2">
        <name>Mg(2+)</name>
        <dbReference type="ChEBI" id="CHEBI:18420"/>
    </cofactor>
    <cofactor evidence="2">
        <name>Mn(2+)</name>
        <dbReference type="ChEBI" id="CHEBI:29035"/>
    </cofactor>
    <text evidence="2">Binds 1 Mg(2+) or Mn(2+) ion per subunit.</text>
</comment>
<comment type="subunit">
    <text evidence="4">Monomer.</text>
</comment>
<comment type="similarity">
    <text evidence="7">Belongs to the monomeric-type IDH family.</text>
</comment>
<reference key="1">
    <citation type="journal article" date="1993" name="J. Bacteriol.">
        <title>Genes encoding two isocitrate dehydrogenase isozymes of a psychrophilic bacterium, Vibrio sp. strain ABE-1.</title>
        <authorList>
            <person name="Ishii A."/>
            <person name="Suzuki M."/>
            <person name="Sahara T."/>
            <person name="Takada Y."/>
            <person name="Sasaki S."/>
            <person name="Fukunaga N."/>
        </authorList>
    </citation>
    <scope>NUCLEOTIDE SEQUENCE [GENOMIC DNA]</scope>
</reference>
<reference key="2">
    <citation type="submission" date="2009-02" db="EMBL/GenBank/DDBJ databases">
        <authorList>
            <person name="Ishii A."/>
            <person name="Suzuki M."/>
            <person name="Sahara T."/>
            <person name="Takada Y."/>
            <person name="Sasaki S."/>
            <person name="Fukunaga N."/>
        </authorList>
    </citation>
    <scope>SEQUENCE REVISION TO 660-673</scope>
</reference>
<reference key="3">
    <citation type="journal article" date="1992" name="J. Biochem.">
        <title>Purification and characterization of monomeric isocitrate dehydrogenase with NADP(+)-specificity from Vibrio parahaemolyticus Y-4.</title>
        <authorList>
            <person name="Fukunaga N."/>
            <person name="Imagawa S."/>
            <person name="Sahara T."/>
            <person name="Ishii A."/>
            <person name="Suzuki M."/>
        </authorList>
    </citation>
    <scope>PROTEIN SEQUENCE OF 2-39</scope>
</reference>
<reference key="4">
    <citation type="journal article" date="1987" name="J. Biochem.">
        <title>Isozymes of isocitrate dehydrogenase from an obligately psychrophilic bacterium, Vibrio sp. strain ABE-1: purification, and modulation of activities by growth conditions.</title>
        <authorList>
            <person name="Ishii A."/>
            <person name="Ochiai T."/>
            <person name="Imagawa S."/>
            <person name="Fukunaga N."/>
            <person name="Sasaki S."/>
            <person name="Minowa O."/>
            <person name="Mizuno Y."/>
            <person name="Shiokawa H."/>
        </authorList>
    </citation>
    <scope>PROTEIN SEQUENCE OF 2-14</scope>
    <scope>SUBUNIT</scope>
</reference>
<sequence length="743" mass="80882">MSTDNSKIIYTITDEAPALATYSLLPIIQAYTASSGINVETRDISLAGRILANFPKYLTKEQRIDDALAELGELAQTPEANIIKLPNISASIPQLEAVIKELQAKGYDLPHYPAEPQNEAEESIKLTYAKILGSAVNPVLREGNSDRRAPASVKQYARNNPHSMGAWSKESKSHVAHMASGDFYGSEKSVTIDGATSVNIEFVAKNGDVTLLKSKLPLLDKEIIDASVMSKSALVEFFETEINKAKEEDVLLSLHLKATMMKVSDPVMFGHAVRVFYKDVFAKHAATFEQLGVDADNGIGDVYAKIARLPAAQKEEIEADLQAVYATRPEMAMVDSDKGITNLHVPSDVIIDASMPAALRASGMMWGPDGKQKDTKFMIPDRNYAGVFSAVVDFCRENGAFNPATMGTVPNVGLMAQKAEEYGSHDKTFTMKAAGTVRVVNSQGERLIEQEVAQGDIYRMCQVKDAPIQDWVKLAVTRARATGTPTVFWLDENRGHDEQMIKKVNTYLADHDTTGLDIQILEPVKACEFTLARVAKGEDAISVTGNVLRDYLTDLFPILELGTSAKMLSIVPLMNGGGLFETGAGGSAPKHVQQFEKENHLRWDSLGEFLALAASLEHVAVTTGNARAQILADTLDAATGKFLDTNKSPSRKVGELDNRGSHFYLAMYWAQALAAQTTDTELQASFSSVAQALTKQEEKIVAELNAAQGPAIDLNGYYFADTKLAEKAMRPSETFNTILSALL</sequence>
<accession>P41561</accession>
<gene>
    <name type="primary">icd2</name>
    <name evidence="6" type="synonym">icdII</name>
</gene>
<keyword id="KW-0903">Direct protein sequencing</keyword>
<keyword id="KW-0329">Glyoxylate bypass</keyword>
<keyword id="KW-0460">Magnesium</keyword>
<keyword id="KW-0464">Manganese</keyword>
<keyword id="KW-0479">Metal-binding</keyword>
<keyword id="KW-0521">NADP</keyword>
<keyword id="KW-0560">Oxidoreductase</keyword>
<keyword id="KW-0816">Tricarboxylic acid cycle</keyword>